<protein>
    <recommendedName>
        <fullName>Contraction-inhibiting peptide 1</fullName>
    </recommendedName>
    <alternativeName>
        <fullName>MIP I</fullName>
    </alternativeName>
</protein>
<comment type="function">
    <text>Inhibitory action on contractions in several molluscan muscles.</text>
</comment>
<comment type="similarity">
    <text evidence="2">To M.edulis MIP II.</text>
</comment>
<keyword id="KW-0027">Amidation</keyword>
<keyword id="KW-0903">Direct protein sequencing</keyword>
<keyword id="KW-0372">Hormone</keyword>
<organism>
    <name type="scientific">Mytilus edulis</name>
    <name type="common">Blue mussel</name>
    <dbReference type="NCBI Taxonomy" id="6550"/>
    <lineage>
        <taxon>Eukaryota</taxon>
        <taxon>Metazoa</taxon>
        <taxon>Spiralia</taxon>
        <taxon>Lophotrochozoa</taxon>
        <taxon>Mollusca</taxon>
        <taxon>Bivalvia</taxon>
        <taxon>Autobranchia</taxon>
        <taxon>Pteriomorphia</taxon>
        <taxon>Mytilida</taxon>
        <taxon>Mytiloidea</taxon>
        <taxon>Mytilidae</taxon>
        <taxon>Mytilinae</taxon>
        <taxon>Mytilus</taxon>
    </lineage>
</organism>
<reference key="1">
    <citation type="journal article" date="1988" name="Biochem. Biophys. Res. Commun.">
        <title>Structures and actions of Mytilus inhibitory peptides.</title>
        <authorList>
            <person name="Hirata T."/>
            <person name="Kubota I."/>
            <person name="Iwasawa N."/>
            <person name="Takabatake I."/>
            <person name="Ikeda T."/>
            <person name="Muneoka Y."/>
        </authorList>
    </citation>
    <scope>PROTEIN SEQUENCE</scope>
    <scope>AMIDATION AT VAL-6</scope>
    <source>
        <tissue>Pedal ganglion</tissue>
    </source>
</reference>
<feature type="peptide" id="PRO_0000044121" description="Contraction-inhibiting peptide 1">
    <location>
        <begin position="1"/>
        <end position="6"/>
    </location>
</feature>
<feature type="modified residue" description="Valine amide" evidence="1">
    <location>
        <position position="6"/>
    </location>
</feature>
<name>CIP1_MYTED</name>
<sequence length="6" mass="637">GSPMFV</sequence>
<proteinExistence type="evidence at protein level"/>
<accession>P13736</accession>
<evidence type="ECO:0000269" key="1">
    <source>
    </source>
</evidence>
<evidence type="ECO:0000305" key="2"/>
<dbReference type="PIR" id="A27696">
    <property type="entry name" value="A27696"/>
</dbReference>
<dbReference type="GO" id="GO:0005179">
    <property type="term" value="F:hormone activity"/>
    <property type="evidence" value="ECO:0007669"/>
    <property type="project" value="UniProtKB-KW"/>
</dbReference>